<sequence length="60" mass="6914">MLQSFIKKVWVPMKPYYTQVYQEIWVGVGLMSLIVYKIRSADKRSKALKGCSPAHAHGHH</sequence>
<evidence type="ECO:0000250" key="1">
    <source>
        <dbReference type="UniProtKB" id="P56378"/>
    </source>
</evidence>
<evidence type="ECO:0000255" key="2"/>
<evidence type="ECO:0000269" key="3">
    <source>
    </source>
</evidence>
<evidence type="ECO:0000303" key="4">
    <source>
    </source>
</evidence>
<evidence type="ECO:0000305" key="5"/>
<evidence type="ECO:0000312" key="6">
    <source>
        <dbReference type="RGD" id="2322889"/>
    </source>
</evidence>
<keyword id="KW-0472">Membrane</keyword>
<keyword id="KW-0496">Mitochondrion</keyword>
<keyword id="KW-1185">Reference proteome</keyword>
<keyword id="KW-0812">Transmembrane</keyword>
<keyword id="KW-1133">Transmembrane helix</keyword>
<accession>D3Z9R8</accession>
<comment type="function">
    <text evidence="1">Mitochondrial membrane ATP synthase (F(1)F(0) ATP synthase or Complex V) produces ATP from ADP in the presence of a proton gradient across the membrane which is generated by electron transport complexes of the respiratory chain. F-type ATPases consist of two structural domains, F(1) - containing the extramembraneous catalytic core and F(0) - containing the membrane proton channel, linked together by a central stalk and a peripheral stalk. During catalysis, ATP synthesis in the catalytic domain of F(1) is coupled via a rotary mechanism of the central stalk subunits to proton translocation. Minor subunit required to maintain the ATP synthase population in the mitochondria.</text>
</comment>
<comment type="subunit">
    <text evidence="3">Component of an ATP synthase complex composed of ATP5PB, ATP5MC1, ATP5F1E, ATP5PD, ATP5ME, ATP5PF, ATP5MF, MT-ATP6, MT-ATP8, ATP5F1A, ATP5F1B, ATP5F1D, ATP5F1C, ATP5PO, ATP5MG, ATP5MK and ATP5MPL.</text>
</comment>
<comment type="subcellular location">
    <subcellularLocation>
        <location evidence="1">Mitochondrion membrane</location>
        <topology evidence="2">Single-pass membrane protein</topology>
    </subcellularLocation>
</comment>
<comment type="similarity">
    <text evidence="5">Belongs to the small mitochondrial proteolipid family.</text>
</comment>
<protein>
    <recommendedName>
        <fullName evidence="5">ATP synthase subunit ATP5MPL, mitochondrial</fullName>
    </recommendedName>
    <alternativeName>
        <fullName evidence="4">6.8 kDa mitochondrial proteolipid protein</fullName>
        <shortName evidence="4">MLQ</shortName>
    </alternativeName>
    <alternativeName>
        <fullName evidence="6">ATP synthase membrane subunit 6.8PL</fullName>
    </alternativeName>
</protein>
<proteinExistence type="evidence at protein level"/>
<reference key="1">
    <citation type="submission" date="2005-09" db="EMBL/GenBank/DDBJ databases">
        <authorList>
            <person name="Mural R.J."/>
            <person name="Adams M.D."/>
            <person name="Myers E.W."/>
            <person name="Smith H.O."/>
            <person name="Venter J.C."/>
        </authorList>
    </citation>
    <scope>NUCLEOTIDE SEQUENCE [LARGE SCALE GENOMIC DNA]</scope>
    <source>
        <strain>Brown Norway</strain>
    </source>
</reference>
<reference key="2">
    <citation type="journal article" date="2007" name="Mol. Cell. Proteomics">
        <title>Identification of two proteins associated with mammalian ATP synthase.</title>
        <authorList>
            <person name="Meyer B."/>
            <person name="Wittig I."/>
            <person name="Trifilieff E."/>
            <person name="Karas M."/>
            <person name="Schaegger H."/>
        </authorList>
    </citation>
    <scope>IDENTIFICATION BY MASS SPECTROMETRY</scope>
    <scope>IDENTIFICATION IN THE ATP SYNTHASE COMPLEX</scope>
</reference>
<feature type="chain" id="PRO_0000416599" description="ATP synthase subunit ATP5MPL, mitochondrial">
    <location>
        <begin position="1"/>
        <end position="60"/>
    </location>
</feature>
<feature type="transmembrane region" description="Helical" evidence="2">
    <location>
        <begin position="15"/>
        <end position="36"/>
    </location>
</feature>
<name>ATP68_RAT</name>
<organism>
    <name type="scientific">Rattus norvegicus</name>
    <name type="common">Rat</name>
    <dbReference type="NCBI Taxonomy" id="10116"/>
    <lineage>
        <taxon>Eukaryota</taxon>
        <taxon>Metazoa</taxon>
        <taxon>Chordata</taxon>
        <taxon>Craniata</taxon>
        <taxon>Vertebrata</taxon>
        <taxon>Euteleostomi</taxon>
        <taxon>Mammalia</taxon>
        <taxon>Eutheria</taxon>
        <taxon>Euarchontoglires</taxon>
        <taxon>Glires</taxon>
        <taxon>Rodentia</taxon>
        <taxon>Myomorpha</taxon>
        <taxon>Muroidea</taxon>
        <taxon>Muridae</taxon>
        <taxon>Murinae</taxon>
        <taxon>Rattus</taxon>
    </lineage>
</organism>
<gene>
    <name evidence="6" type="primary">Atp5mpl</name>
</gene>
<dbReference type="EMBL" id="CH473980">
    <property type="protein sequence ID" value="EDM08582.1"/>
    <property type="molecule type" value="Genomic_DNA"/>
</dbReference>
<dbReference type="EMBL" id="CH473956">
    <property type="protein sequence ID" value="EDM17776.1"/>
    <property type="molecule type" value="Genomic_DNA"/>
</dbReference>
<dbReference type="SMR" id="D3Z9R8"/>
<dbReference type="FunCoup" id="D3Z9R8">
    <property type="interactions" value="219"/>
</dbReference>
<dbReference type="STRING" id="10116.ENSRNOP00000051501"/>
<dbReference type="iPTMnet" id="D3Z9R8"/>
<dbReference type="PhosphoSitePlus" id="D3Z9R8"/>
<dbReference type="SwissPalm" id="D3Z9R8"/>
<dbReference type="PaxDb" id="10116-ENSRNOP00000051501"/>
<dbReference type="Ensembl" id="ENSRNOT00000044231.2">
    <property type="protein sequence ID" value="ENSRNOP00000067503.1"/>
    <property type="gene ID" value="ENSRNOG00000066701.1"/>
</dbReference>
<dbReference type="Ensembl" id="ENSRNOT00000051411.5">
    <property type="protein sequence ID" value="ENSRNOP00000051501.2"/>
    <property type="gene ID" value="ENSRNOG00000070574.1"/>
</dbReference>
<dbReference type="UCSC" id="RGD:2319321">
    <property type="organism name" value="rat"/>
</dbReference>
<dbReference type="AGR" id="RGD:6486223"/>
<dbReference type="RGD" id="2322889">
    <property type="gene designation" value="Atp5mpl"/>
</dbReference>
<dbReference type="eggNOG" id="ENOG502SVSA">
    <property type="taxonomic scope" value="Eukaryota"/>
</dbReference>
<dbReference type="GeneTree" id="ENSGT00390000016760"/>
<dbReference type="HOGENOM" id="CLU_198465_0_0_1"/>
<dbReference type="InParanoid" id="D3Z9R8"/>
<dbReference type="OMA" id="AMIPKSW"/>
<dbReference type="OrthoDB" id="8767433at2759"/>
<dbReference type="PhylomeDB" id="D3Z9R8"/>
<dbReference type="TreeFam" id="TF338412"/>
<dbReference type="PRO" id="PR:D3Z9R8"/>
<dbReference type="Proteomes" id="UP000002494">
    <property type="component" value="Chromosome 1"/>
</dbReference>
<dbReference type="Proteomes" id="UP000234681">
    <property type="component" value="Chromosome 1"/>
</dbReference>
<dbReference type="Bgee" id="ENSRNOG00000031802">
    <property type="expression patterns" value="Expressed in cerebellum and 19 other cell types or tissues"/>
</dbReference>
<dbReference type="GO" id="GO:0031966">
    <property type="term" value="C:mitochondrial membrane"/>
    <property type="evidence" value="ECO:0007669"/>
    <property type="project" value="UniProtKB-SubCell"/>
</dbReference>
<dbReference type="GO" id="GO:0045259">
    <property type="term" value="C:proton-transporting ATP synthase complex"/>
    <property type="evidence" value="ECO:0000314"/>
    <property type="project" value="UniProtKB"/>
</dbReference>
<dbReference type="InterPro" id="IPR012574">
    <property type="entry name" value="ATP5MJ"/>
</dbReference>
<dbReference type="PANTHER" id="PTHR15233:SF1">
    <property type="entry name" value="ATP SYNTHASE SUBUNIT ATP5MJ, MITOCHONDRIAL"/>
    <property type="match status" value="1"/>
</dbReference>
<dbReference type="PANTHER" id="PTHR15233">
    <property type="entry name" value="MITOCHONDRIAL PROTEOLIPID"/>
    <property type="match status" value="1"/>
</dbReference>
<dbReference type="Pfam" id="PF08039">
    <property type="entry name" value="Mit_proteolip"/>
    <property type="match status" value="1"/>
</dbReference>